<name>ISPF_CHRSD</name>
<protein>
    <recommendedName>
        <fullName evidence="1">2-C-methyl-D-erythritol 2,4-cyclodiphosphate synthase</fullName>
        <shortName evidence="1">MECDP-synthase</shortName>
        <shortName evidence="1">MECPP-synthase</shortName>
        <shortName evidence="1">MECPS</shortName>
        <ecNumber evidence="1">4.6.1.12</ecNumber>
    </recommendedName>
</protein>
<proteinExistence type="inferred from homology"/>
<comment type="function">
    <text evidence="1">Involved in the biosynthesis of isopentenyl diphosphate (IPP) and dimethylallyl diphosphate (DMAPP), two major building blocks of isoprenoid compounds. Catalyzes the conversion of 4-diphosphocytidyl-2-C-methyl-D-erythritol 2-phosphate (CDP-ME2P) to 2-C-methyl-D-erythritol 2,4-cyclodiphosphate (ME-CPP) with a corresponding release of cytidine 5-monophosphate (CMP).</text>
</comment>
<comment type="catalytic activity">
    <reaction evidence="1">
        <text>4-CDP-2-C-methyl-D-erythritol 2-phosphate = 2-C-methyl-D-erythritol 2,4-cyclic diphosphate + CMP</text>
        <dbReference type="Rhea" id="RHEA:23864"/>
        <dbReference type="ChEBI" id="CHEBI:57919"/>
        <dbReference type="ChEBI" id="CHEBI:58483"/>
        <dbReference type="ChEBI" id="CHEBI:60377"/>
        <dbReference type="EC" id="4.6.1.12"/>
    </reaction>
</comment>
<comment type="cofactor">
    <cofactor evidence="1">
        <name>a divalent metal cation</name>
        <dbReference type="ChEBI" id="CHEBI:60240"/>
    </cofactor>
    <text evidence="1">Binds 1 divalent metal cation per subunit.</text>
</comment>
<comment type="pathway">
    <text evidence="1">Isoprenoid biosynthesis; isopentenyl diphosphate biosynthesis via DXP pathway; isopentenyl diphosphate from 1-deoxy-D-xylulose 5-phosphate: step 4/6.</text>
</comment>
<comment type="subunit">
    <text evidence="1">Homotrimer.</text>
</comment>
<comment type="similarity">
    <text evidence="1">Belongs to the IspF family.</text>
</comment>
<feature type="chain" id="PRO_1000022821" description="2-C-methyl-D-erythritol 2,4-cyclodiphosphate synthase">
    <location>
        <begin position="1"/>
        <end position="162"/>
    </location>
</feature>
<feature type="binding site" evidence="1">
    <location>
        <begin position="10"/>
        <end position="12"/>
    </location>
    <ligand>
        <name>4-CDP-2-C-methyl-D-erythritol 2-phosphate</name>
        <dbReference type="ChEBI" id="CHEBI:57919"/>
    </ligand>
</feature>
<feature type="binding site" evidence="1">
    <location>
        <position position="10"/>
    </location>
    <ligand>
        <name>a divalent metal cation</name>
        <dbReference type="ChEBI" id="CHEBI:60240"/>
    </ligand>
</feature>
<feature type="binding site" evidence="1">
    <location>
        <position position="12"/>
    </location>
    <ligand>
        <name>a divalent metal cation</name>
        <dbReference type="ChEBI" id="CHEBI:60240"/>
    </ligand>
</feature>
<feature type="binding site" evidence="1">
    <location>
        <begin position="36"/>
        <end position="37"/>
    </location>
    <ligand>
        <name>4-CDP-2-C-methyl-D-erythritol 2-phosphate</name>
        <dbReference type="ChEBI" id="CHEBI:57919"/>
    </ligand>
</feature>
<feature type="binding site" evidence="1">
    <location>
        <position position="44"/>
    </location>
    <ligand>
        <name>a divalent metal cation</name>
        <dbReference type="ChEBI" id="CHEBI:60240"/>
    </ligand>
</feature>
<feature type="binding site" evidence="1">
    <location>
        <begin position="58"/>
        <end position="60"/>
    </location>
    <ligand>
        <name>4-CDP-2-C-methyl-D-erythritol 2-phosphate</name>
        <dbReference type="ChEBI" id="CHEBI:57919"/>
    </ligand>
</feature>
<feature type="binding site" evidence="1">
    <location>
        <begin position="63"/>
        <end position="67"/>
    </location>
    <ligand>
        <name>4-CDP-2-C-methyl-D-erythritol 2-phosphate</name>
        <dbReference type="ChEBI" id="CHEBI:57919"/>
    </ligand>
</feature>
<feature type="binding site" evidence="1">
    <location>
        <begin position="102"/>
        <end position="108"/>
    </location>
    <ligand>
        <name>4-CDP-2-C-methyl-D-erythritol 2-phosphate</name>
        <dbReference type="ChEBI" id="CHEBI:57919"/>
    </ligand>
</feature>
<feature type="binding site" evidence="1">
    <location>
        <begin position="134"/>
        <end position="137"/>
    </location>
    <ligand>
        <name>4-CDP-2-C-methyl-D-erythritol 2-phosphate</name>
        <dbReference type="ChEBI" id="CHEBI:57919"/>
    </ligand>
</feature>
<feature type="binding site" evidence="1">
    <location>
        <position position="141"/>
    </location>
    <ligand>
        <name>4-CDP-2-C-methyl-D-erythritol 2-phosphate</name>
        <dbReference type="ChEBI" id="CHEBI:57919"/>
    </ligand>
</feature>
<feature type="binding site" evidence="1">
    <location>
        <position position="144"/>
    </location>
    <ligand>
        <name>4-CDP-2-C-methyl-D-erythritol 2-phosphate</name>
        <dbReference type="ChEBI" id="CHEBI:57919"/>
    </ligand>
</feature>
<feature type="site" description="Transition state stabilizer" evidence="1">
    <location>
        <position position="36"/>
    </location>
</feature>
<feature type="site" description="Transition state stabilizer" evidence="1">
    <location>
        <position position="135"/>
    </location>
</feature>
<dbReference type="EC" id="4.6.1.12" evidence="1"/>
<dbReference type="EMBL" id="CP000285">
    <property type="protein sequence ID" value="ABE59984.1"/>
    <property type="molecule type" value="Genomic_DNA"/>
</dbReference>
<dbReference type="RefSeq" id="WP_011507930.1">
    <property type="nucleotide sequence ID" value="NC_007963.1"/>
</dbReference>
<dbReference type="SMR" id="Q1QU74"/>
<dbReference type="STRING" id="290398.Csal_2637"/>
<dbReference type="GeneID" id="95335335"/>
<dbReference type="KEGG" id="csa:Csal_2637"/>
<dbReference type="eggNOG" id="COG0245">
    <property type="taxonomic scope" value="Bacteria"/>
</dbReference>
<dbReference type="HOGENOM" id="CLU_084630_2_0_6"/>
<dbReference type="OrthoDB" id="9804336at2"/>
<dbReference type="UniPathway" id="UPA00056">
    <property type="reaction ID" value="UER00095"/>
</dbReference>
<dbReference type="Proteomes" id="UP000000239">
    <property type="component" value="Chromosome"/>
</dbReference>
<dbReference type="GO" id="GO:0008685">
    <property type="term" value="F:2-C-methyl-D-erythritol 2,4-cyclodiphosphate synthase activity"/>
    <property type="evidence" value="ECO:0007669"/>
    <property type="project" value="UniProtKB-UniRule"/>
</dbReference>
<dbReference type="GO" id="GO:0046872">
    <property type="term" value="F:metal ion binding"/>
    <property type="evidence" value="ECO:0007669"/>
    <property type="project" value="UniProtKB-KW"/>
</dbReference>
<dbReference type="GO" id="GO:0019288">
    <property type="term" value="P:isopentenyl diphosphate biosynthetic process, methylerythritol 4-phosphate pathway"/>
    <property type="evidence" value="ECO:0007669"/>
    <property type="project" value="UniProtKB-UniRule"/>
</dbReference>
<dbReference type="GO" id="GO:0016114">
    <property type="term" value="P:terpenoid biosynthetic process"/>
    <property type="evidence" value="ECO:0007669"/>
    <property type="project" value="InterPro"/>
</dbReference>
<dbReference type="CDD" id="cd00554">
    <property type="entry name" value="MECDP_synthase"/>
    <property type="match status" value="1"/>
</dbReference>
<dbReference type="FunFam" id="3.30.1330.50:FF:000001">
    <property type="entry name" value="2-C-methyl-D-erythritol 2,4-cyclodiphosphate synthase"/>
    <property type="match status" value="1"/>
</dbReference>
<dbReference type="Gene3D" id="3.30.1330.50">
    <property type="entry name" value="2-C-methyl-D-erythritol 2,4-cyclodiphosphate synthase"/>
    <property type="match status" value="1"/>
</dbReference>
<dbReference type="HAMAP" id="MF_00107">
    <property type="entry name" value="IspF"/>
    <property type="match status" value="1"/>
</dbReference>
<dbReference type="InterPro" id="IPR003526">
    <property type="entry name" value="MECDP_synthase"/>
</dbReference>
<dbReference type="InterPro" id="IPR020555">
    <property type="entry name" value="MECDP_synthase_CS"/>
</dbReference>
<dbReference type="InterPro" id="IPR036571">
    <property type="entry name" value="MECDP_synthase_sf"/>
</dbReference>
<dbReference type="NCBIfam" id="TIGR00151">
    <property type="entry name" value="ispF"/>
    <property type="match status" value="1"/>
</dbReference>
<dbReference type="PANTHER" id="PTHR43181">
    <property type="entry name" value="2-C-METHYL-D-ERYTHRITOL 2,4-CYCLODIPHOSPHATE SYNTHASE, CHLOROPLASTIC"/>
    <property type="match status" value="1"/>
</dbReference>
<dbReference type="PANTHER" id="PTHR43181:SF1">
    <property type="entry name" value="2-C-METHYL-D-ERYTHRITOL 2,4-CYCLODIPHOSPHATE SYNTHASE, CHLOROPLASTIC"/>
    <property type="match status" value="1"/>
</dbReference>
<dbReference type="Pfam" id="PF02542">
    <property type="entry name" value="YgbB"/>
    <property type="match status" value="1"/>
</dbReference>
<dbReference type="SUPFAM" id="SSF69765">
    <property type="entry name" value="IpsF-like"/>
    <property type="match status" value="1"/>
</dbReference>
<dbReference type="PROSITE" id="PS01350">
    <property type="entry name" value="ISPF"/>
    <property type="match status" value="1"/>
</dbReference>
<accession>Q1QU74</accession>
<gene>
    <name evidence="1" type="primary">ispF</name>
    <name type="ordered locus">Csal_2637</name>
</gene>
<sequence>MTLRIGHGFDVHRFGDGDHLMIGGVRIPYVQGFVAHSDGDVLLHAICDALLGACALGDIGRHFPDTDAAWAGADSRDLLRHVHTLVMAAGYAVANLDATVIAQAPRMAEHIPAMRACIAEDLDLDTTAVNVKATTSERLGFTGRKEGIAAEAVVLLMPTGTT</sequence>
<reference key="1">
    <citation type="journal article" date="2011" name="Stand. Genomic Sci.">
        <title>Complete genome sequence of the halophilic and highly halotolerant Chromohalobacter salexigens type strain (1H11(T)).</title>
        <authorList>
            <person name="Copeland A."/>
            <person name="O'Connor K."/>
            <person name="Lucas S."/>
            <person name="Lapidus A."/>
            <person name="Berry K.W."/>
            <person name="Detter J.C."/>
            <person name="Del Rio T.G."/>
            <person name="Hammon N."/>
            <person name="Dalin E."/>
            <person name="Tice H."/>
            <person name="Pitluck S."/>
            <person name="Bruce D."/>
            <person name="Goodwin L."/>
            <person name="Han C."/>
            <person name="Tapia R."/>
            <person name="Saunders E."/>
            <person name="Schmutz J."/>
            <person name="Brettin T."/>
            <person name="Larimer F."/>
            <person name="Land M."/>
            <person name="Hauser L."/>
            <person name="Vargas C."/>
            <person name="Nieto J.J."/>
            <person name="Kyrpides N.C."/>
            <person name="Ivanova N."/>
            <person name="Goker M."/>
            <person name="Klenk H.P."/>
            <person name="Csonka L.N."/>
            <person name="Woyke T."/>
        </authorList>
    </citation>
    <scope>NUCLEOTIDE SEQUENCE [LARGE SCALE GENOMIC DNA]</scope>
    <source>
        <strain>ATCC BAA-138 / DSM 3043 / CIP 106854 / NCIMB 13768 / 1H11</strain>
    </source>
</reference>
<organism>
    <name type="scientific">Chromohalobacter salexigens (strain ATCC BAA-138 / DSM 3043 / CIP 106854 / NCIMB 13768 / 1H11)</name>
    <dbReference type="NCBI Taxonomy" id="290398"/>
    <lineage>
        <taxon>Bacteria</taxon>
        <taxon>Pseudomonadati</taxon>
        <taxon>Pseudomonadota</taxon>
        <taxon>Gammaproteobacteria</taxon>
        <taxon>Oceanospirillales</taxon>
        <taxon>Halomonadaceae</taxon>
        <taxon>Chromohalobacter</taxon>
    </lineage>
</organism>
<evidence type="ECO:0000255" key="1">
    <source>
        <dbReference type="HAMAP-Rule" id="MF_00107"/>
    </source>
</evidence>
<keyword id="KW-0414">Isoprene biosynthesis</keyword>
<keyword id="KW-0456">Lyase</keyword>
<keyword id="KW-0479">Metal-binding</keyword>
<keyword id="KW-1185">Reference proteome</keyword>